<comment type="function">
    <text evidence="1">Pole-localizer protein involved in the regulation of several cellular processes.</text>
</comment>
<comment type="subcellular location">
    <subcellularLocation>
        <location evidence="1">Cytoplasm</location>
    </subcellularLocation>
    <text evidence="1">Forms clusters that localize mainly near one pole of the cell.</text>
</comment>
<comment type="similarity">
    <text evidence="1">Belongs to the pole-localizer TmaR family.</text>
</comment>
<comment type="sequence caution" evidence="2">
    <conflict type="erroneous initiation">
        <sequence resource="EMBL-CDS" id="AAG57066"/>
    </conflict>
</comment>
<comment type="sequence caution" evidence="2">
    <conflict type="erroneous initiation">
        <sequence resource="EMBL-CDS" id="BAB36232"/>
    </conflict>
</comment>
<feature type="chain" id="PRO_0000072760" description="Pole-localizer protein TmaR">
    <location>
        <begin position="1"/>
        <end position="109"/>
    </location>
</feature>
<feature type="coiled-coil region" evidence="1">
    <location>
        <begin position="14"/>
        <end position="41"/>
    </location>
</feature>
<proteinExistence type="inferred from homology"/>
<sequence>METTKPSFQDVLEFVRLFRRKNKLQREIQDVEKKIRDNQKRVLLLDNLSDYIKPGMSVEAIQGIIASMKGDYEDRVDDYIIKNAELSKERRDISKKLKAMGEMKNGEAK</sequence>
<name>TMAR_ECO57</name>
<protein>
    <recommendedName>
        <fullName evidence="1">Pole-localizer protein TmaR</fullName>
    </recommendedName>
</protein>
<reference key="1">
    <citation type="journal article" date="2001" name="Nature">
        <title>Genome sequence of enterohaemorrhagic Escherichia coli O157:H7.</title>
        <authorList>
            <person name="Perna N.T."/>
            <person name="Plunkett G. III"/>
            <person name="Burland V."/>
            <person name="Mau B."/>
            <person name="Glasner J.D."/>
            <person name="Rose D.J."/>
            <person name="Mayhew G.F."/>
            <person name="Evans P.S."/>
            <person name="Gregor J."/>
            <person name="Kirkpatrick H.A."/>
            <person name="Posfai G."/>
            <person name="Hackett J."/>
            <person name="Klink S."/>
            <person name="Boutin A."/>
            <person name="Shao Y."/>
            <person name="Miller L."/>
            <person name="Grotbeck E.J."/>
            <person name="Davis N.W."/>
            <person name="Lim A."/>
            <person name="Dimalanta E.T."/>
            <person name="Potamousis K."/>
            <person name="Apodaca J."/>
            <person name="Anantharaman T.S."/>
            <person name="Lin J."/>
            <person name="Yen G."/>
            <person name="Schwartz D.C."/>
            <person name="Welch R.A."/>
            <person name="Blattner F.R."/>
        </authorList>
    </citation>
    <scope>NUCLEOTIDE SEQUENCE [LARGE SCALE GENOMIC DNA]</scope>
    <source>
        <strain>O157:H7 / EDL933 / ATCC 700927 / EHEC</strain>
    </source>
</reference>
<reference key="2">
    <citation type="journal article" date="2001" name="DNA Res.">
        <title>Complete genome sequence of enterohemorrhagic Escherichia coli O157:H7 and genomic comparison with a laboratory strain K-12.</title>
        <authorList>
            <person name="Hayashi T."/>
            <person name="Makino K."/>
            <person name="Ohnishi M."/>
            <person name="Kurokawa K."/>
            <person name="Ishii K."/>
            <person name="Yokoyama K."/>
            <person name="Han C.-G."/>
            <person name="Ohtsubo E."/>
            <person name="Nakayama K."/>
            <person name="Murata T."/>
            <person name="Tanaka M."/>
            <person name="Tobe T."/>
            <person name="Iida T."/>
            <person name="Takami H."/>
            <person name="Honda T."/>
            <person name="Sasakawa C."/>
            <person name="Ogasawara N."/>
            <person name="Yasunaga T."/>
            <person name="Kuhara S."/>
            <person name="Shiba T."/>
            <person name="Hattori M."/>
            <person name="Shinagawa H."/>
        </authorList>
    </citation>
    <scope>NUCLEOTIDE SEQUENCE [LARGE SCALE GENOMIC DNA]</scope>
    <source>
        <strain>O157:H7 / Sakai / RIMD 0509952 / EHEC</strain>
    </source>
</reference>
<gene>
    <name evidence="1" type="primary">tmaR</name>
    <name type="synonym">yeeX</name>
    <name type="ordered locus">Z3168</name>
    <name type="ordered locus">ECs2809</name>
</gene>
<organism>
    <name type="scientific">Escherichia coli O157:H7</name>
    <dbReference type="NCBI Taxonomy" id="83334"/>
    <lineage>
        <taxon>Bacteria</taxon>
        <taxon>Pseudomonadati</taxon>
        <taxon>Pseudomonadota</taxon>
        <taxon>Gammaproteobacteria</taxon>
        <taxon>Enterobacterales</taxon>
        <taxon>Enterobacteriaceae</taxon>
        <taxon>Escherichia</taxon>
    </lineage>
</organism>
<evidence type="ECO:0000255" key="1">
    <source>
        <dbReference type="HAMAP-Rule" id="MF_00683"/>
    </source>
</evidence>
<evidence type="ECO:0000305" key="2"/>
<keyword id="KW-0175">Coiled coil</keyword>
<keyword id="KW-0963">Cytoplasm</keyword>
<keyword id="KW-1185">Reference proteome</keyword>
<accession>P0A8M8</accession>
<accession>O07992</accession>
<accession>O07995</accession>
<accession>P76367</accession>
<accession>Q8X8U3</accession>
<dbReference type="EMBL" id="AE005174">
    <property type="protein sequence ID" value="AAG57066.1"/>
    <property type="status" value="ALT_INIT"/>
    <property type="molecule type" value="Genomic_DNA"/>
</dbReference>
<dbReference type="EMBL" id="BA000007">
    <property type="protein sequence ID" value="BAB36232.1"/>
    <property type="status" value="ALT_INIT"/>
    <property type="molecule type" value="Genomic_DNA"/>
</dbReference>
<dbReference type="PIR" id="A99980">
    <property type="entry name" value="A99980"/>
</dbReference>
<dbReference type="PIR" id="F85825">
    <property type="entry name" value="F85825"/>
</dbReference>
<dbReference type="RefSeq" id="NP_310836.2">
    <property type="nucleotide sequence ID" value="NC_002695.1"/>
</dbReference>
<dbReference type="RefSeq" id="WP_000450409.1">
    <property type="nucleotide sequence ID" value="NZ_VOAI01000013.1"/>
</dbReference>
<dbReference type="SMR" id="P0A8M8"/>
<dbReference type="STRING" id="155864.Z3168"/>
<dbReference type="GeneID" id="912397"/>
<dbReference type="KEGG" id="ece:Z3168"/>
<dbReference type="KEGG" id="ecs:ECs_2809"/>
<dbReference type="PATRIC" id="fig|386585.9.peg.2945"/>
<dbReference type="eggNOG" id="COG2926">
    <property type="taxonomic scope" value="Bacteria"/>
</dbReference>
<dbReference type="HOGENOM" id="CLU_153146_0_0_6"/>
<dbReference type="OMA" id="ENMRDDY"/>
<dbReference type="Proteomes" id="UP000000558">
    <property type="component" value="Chromosome"/>
</dbReference>
<dbReference type="Proteomes" id="UP000002519">
    <property type="component" value="Chromosome"/>
</dbReference>
<dbReference type="GO" id="GO:0005829">
    <property type="term" value="C:cytosol"/>
    <property type="evidence" value="ECO:0007669"/>
    <property type="project" value="TreeGrafter"/>
</dbReference>
<dbReference type="HAMAP" id="MF_00683">
    <property type="entry name" value="Pole_loc_TmaR"/>
    <property type="match status" value="1"/>
</dbReference>
<dbReference type="InterPro" id="IPR007458">
    <property type="entry name" value="DUF496"/>
</dbReference>
<dbReference type="InterPro" id="IPR053375">
    <property type="entry name" value="UPF0265"/>
</dbReference>
<dbReference type="NCBIfam" id="NF003844">
    <property type="entry name" value="PRK05423.1"/>
    <property type="match status" value="1"/>
</dbReference>
<dbReference type="NCBIfam" id="NF040881">
    <property type="entry name" value="PTS_reg_TmaR"/>
    <property type="match status" value="1"/>
</dbReference>
<dbReference type="PANTHER" id="PTHR39591">
    <property type="entry name" value="UPF0265 PROTEIN YEEX"/>
    <property type="match status" value="1"/>
</dbReference>
<dbReference type="PANTHER" id="PTHR39591:SF1">
    <property type="entry name" value="UPF0265 PROTEIN YEEX"/>
    <property type="match status" value="1"/>
</dbReference>
<dbReference type="Pfam" id="PF04363">
    <property type="entry name" value="DUF496"/>
    <property type="match status" value="1"/>
</dbReference>
<dbReference type="PIRSF" id="PIRSF028773">
    <property type="entry name" value="UCP028773"/>
    <property type="match status" value="1"/>
</dbReference>